<name>IDI2_METMP</name>
<dbReference type="EC" id="5.3.3.2" evidence="1"/>
<dbReference type="EMBL" id="BX950229">
    <property type="protein sequence ID" value="CAF29599.1"/>
    <property type="molecule type" value="Genomic_DNA"/>
</dbReference>
<dbReference type="RefSeq" id="WP_011169987.1">
    <property type="nucleotide sequence ID" value="NC_005791.1"/>
</dbReference>
<dbReference type="SMR" id="Q6M174"/>
<dbReference type="STRING" id="267377.MMP0043"/>
<dbReference type="EnsemblBacteria" id="CAF29599">
    <property type="protein sequence ID" value="CAF29599"/>
    <property type="gene ID" value="MMP0043"/>
</dbReference>
<dbReference type="GeneID" id="41278452"/>
<dbReference type="KEGG" id="mmp:MMP0043"/>
<dbReference type="PATRIC" id="fig|267377.15.peg.44"/>
<dbReference type="eggNOG" id="arCOG00613">
    <property type="taxonomic scope" value="Archaea"/>
</dbReference>
<dbReference type="HOGENOM" id="CLU_065515_1_0_2"/>
<dbReference type="OrthoDB" id="371955at2157"/>
<dbReference type="Proteomes" id="UP000000590">
    <property type="component" value="Chromosome"/>
</dbReference>
<dbReference type="GO" id="GO:0005737">
    <property type="term" value="C:cytoplasm"/>
    <property type="evidence" value="ECO:0007669"/>
    <property type="project" value="UniProtKB-SubCell"/>
</dbReference>
<dbReference type="GO" id="GO:0010181">
    <property type="term" value="F:FMN binding"/>
    <property type="evidence" value="ECO:0007669"/>
    <property type="project" value="UniProtKB-UniRule"/>
</dbReference>
<dbReference type="GO" id="GO:0004452">
    <property type="term" value="F:isopentenyl-diphosphate delta-isomerase activity"/>
    <property type="evidence" value="ECO:0007669"/>
    <property type="project" value="UniProtKB-UniRule"/>
</dbReference>
<dbReference type="GO" id="GO:0000287">
    <property type="term" value="F:magnesium ion binding"/>
    <property type="evidence" value="ECO:0007669"/>
    <property type="project" value="UniProtKB-UniRule"/>
</dbReference>
<dbReference type="GO" id="GO:0070402">
    <property type="term" value="F:NADPH binding"/>
    <property type="evidence" value="ECO:0007669"/>
    <property type="project" value="UniProtKB-UniRule"/>
</dbReference>
<dbReference type="GO" id="GO:0016491">
    <property type="term" value="F:oxidoreductase activity"/>
    <property type="evidence" value="ECO:0007669"/>
    <property type="project" value="InterPro"/>
</dbReference>
<dbReference type="GO" id="GO:0008299">
    <property type="term" value="P:isoprenoid biosynthetic process"/>
    <property type="evidence" value="ECO:0007669"/>
    <property type="project" value="UniProtKB-UniRule"/>
</dbReference>
<dbReference type="CDD" id="cd02811">
    <property type="entry name" value="IDI-2_FMN"/>
    <property type="match status" value="1"/>
</dbReference>
<dbReference type="Gene3D" id="3.20.20.70">
    <property type="entry name" value="Aldolase class I"/>
    <property type="match status" value="1"/>
</dbReference>
<dbReference type="HAMAP" id="MF_00354">
    <property type="entry name" value="Idi_2"/>
    <property type="match status" value="1"/>
</dbReference>
<dbReference type="InterPro" id="IPR013785">
    <property type="entry name" value="Aldolase_TIM"/>
</dbReference>
<dbReference type="InterPro" id="IPR000262">
    <property type="entry name" value="FMN-dep_DH"/>
</dbReference>
<dbReference type="InterPro" id="IPR011179">
    <property type="entry name" value="IPdP_isomerase"/>
</dbReference>
<dbReference type="NCBIfam" id="TIGR02151">
    <property type="entry name" value="IPP_isom_2"/>
    <property type="match status" value="1"/>
</dbReference>
<dbReference type="PANTHER" id="PTHR43665">
    <property type="entry name" value="ISOPENTENYL-DIPHOSPHATE DELTA-ISOMERASE"/>
    <property type="match status" value="1"/>
</dbReference>
<dbReference type="PANTHER" id="PTHR43665:SF1">
    <property type="entry name" value="ISOPENTENYL-DIPHOSPHATE DELTA-ISOMERASE"/>
    <property type="match status" value="1"/>
</dbReference>
<dbReference type="Pfam" id="PF01070">
    <property type="entry name" value="FMN_dh"/>
    <property type="match status" value="1"/>
</dbReference>
<dbReference type="PIRSF" id="PIRSF003314">
    <property type="entry name" value="IPP_isomerase"/>
    <property type="match status" value="1"/>
</dbReference>
<dbReference type="SMART" id="SM01240">
    <property type="entry name" value="IMPDH"/>
    <property type="match status" value="1"/>
</dbReference>
<dbReference type="SUPFAM" id="SSF51395">
    <property type="entry name" value="FMN-linked oxidoreductases"/>
    <property type="match status" value="1"/>
</dbReference>
<comment type="function">
    <text evidence="1">Involved in the biosynthesis of isoprenoids. Catalyzes the 1,3-allylic rearrangement of the homoallylic substrate isopentenyl (IPP) to its allylic isomer, dimethylallyl diphosphate (DMAPP).</text>
</comment>
<comment type="catalytic activity">
    <reaction evidence="1">
        <text>isopentenyl diphosphate = dimethylallyl diphosphate</text>
        <dbReference type="Rhea" id="RHEA:23284"/>
        <dbReference type="ChEBI" id="CHEBI:57623"/>
        <dbReference type="ChEBI" id="CHEBI:128769"/>
        <dbReference type="EC" id="5.3.3.2"/>
    </reaction>
</comment>
<comment type="cofactor">
    <cofactor evidence="1">
        <name>FMN</name>
        <dbReference type="ChEBI" id="CHEBI:58210"/>
    </cofactor>
</comment>
<comment type="cofactor">
    <cofactor evidence="1">
        <name>NADPH</name>
        <dbReference type="ChEBI" id="CHEBI:57783"/>
    </cofactor>
</comment>
<comment type="cofactor">
    <cofactor evidence="1">
        <name>Mg(2+)</name>
        <dbReference type="ChEBI" id="CHEBI:18420"/>
    </cofactor>
</comment>
<comment type="subunit">
    <text evidence="1">Homooctamer. Dimer of tetramers.</text>
</comment>
<comment type="subcellular location">
    <subcellularLocation>
        <location evidence="1">Cytoplasm</location>
    </subcellularLocation>
</comment>
<comment type="similarity">
    <text evidence="1">Belongs to the IPP isomerase type 2 family.</text>
</comment>
<reference key="1">
    <citation type="journal article" date="2004" name="J. Bacteriol.">
        <title>Complete genome sequence of the genetically tractable hydrogenotrophic methanogen Methanococcus maripaludis.</title>
        <authorList>
            <person name="Hendrickson E.L."/>
            <person name="Kaul R."/>
            <person name="Zhou Y."/>
            <person name="Bovee D."/>
            <person name="Chapman P."/>
            <person name="Chung J."/>
            <person name="Conway de Macario E."/>
            <person name="Dodsworth J.A."/>
            <person name="Gillett W."/>
            <person name="Graham D.E."/>
            <person name="Hackett M."/>
            <person name="Haydock A.K."/>
            <person name="Kang A."/>
            <person name="Land M.L."/>
            <person name="Levy R."/>
            <person name="Lie T.J."/>
            <person name="Major T.A."/>
            <person name="Moore B.C."/>
            <person name="Porat I."/>
            <person name="Palmeiri A."/>
            <person name="Rouse G."/>
            <person name="Saenphimmachak C."/>
            <person name="Soell D."/>
            <person name="Van Dien S."/>
            <person name="Wang T."/>
            <person name="Whitman W.B."/>
            <person name="Xia Q."/>
            <person name="Zhang Y."/>
            <person name="Larimer F.W."/>
            <person name="Olson M.V."/>
            <person name="Leigh J.A."/>
        </authorList>
    </citation>
    <scope>NUCLEOTIDE SEQUENCE [LARGE SCALE GENOMIC DNA]</scope>
    <source>
        <strain>DSM 14266 / JCM 13030 / NBRC 101832 / S2 / LL</strain>
    </source>
</reference>
<feature type="chain" id="PRO_0000229517" description="Isopentenyl-diphosphate delta-isomerase">
    <location>
        <begin position="1"/>
        <end position="355"/>
    </location>
</feature>
<feature type="binding site" evidence="1">
    <location>
        <begin position="9"/>
        <end position="10"/>
    </location>
    <ligand>
        <name>substrate</name>
    </ligand>
</feature>
<feature type="binding site" evidence="1">
    <location>
        <begin position="67"/>
        <end position="69"/>
    </location>
    <ligand>
        <name>FMN</name>
        <dbReference type="ChEBI" id="CHEBI:58210"/>
    </ligand>
</feature>
<feature type="binding site" evidence="1">
    <location>
        <begin position="97"/>
        <end position="99"/>
    </location>
    <ligand>
        <name>substrate</name>
    </ligand>
</feature>
<feature type="binding site" evidence="1">
    <location>
        <position position="97"/>
    </location>
    <ligand>
        <name>FMN</name>
        <dbReference type="ChEBI" id="CHEBI:58210"/>
    </ligand>
</feature>
<feature type="binding site" evidence="1">
    <location>
        <position position="125"/>
    </location>
    <ligand>
        <name>FMN</name>
        <dbReference type="ChEBI" id="CHEBI:58210"/>
    </ligand>
</feature>
<feature type="binding site" evidence="1">
    <location>
        <position position="161"/>
    </location>
    <ligand>
        <name>substrate</name>
    </ligand>
</feature>
<feature type="binding site" evidence="1">
    <location>
        <position position="162"/>
    </location>
    <ligand>
        <name>Mg(2+)</name>
        <dbReference type="ChEBI" id="CHEBI:18420"/>
    </ligand>
</feature>
<feature type="binding site" evidence="1">
    <location>
        <position position="197"/>
    </location>
    <ligand>
        <name>FMN</name>
        <dbReference type="ChEBI" id="CHEBI:58210"/>
    </ligand>
</feature>
<feature type="binding site" evidence="1">
    <location>
        <position position="227"/>
    </location>
    <ligand>
        <name>FMN</name>
        <dbReference type="ChEBI" id="CHEBI:58210"/>
    </ligand>
</feature>
<feature type="binding site" evidence="1">
    <location>
        <begin position="276"/>
        <end position="278"/>
    </location>
    <ligand>
        <name>FMN</name>
        <dbReference type="ChEBI" id="CHEBI:58210"/>
    </ligand>
</feature>
<feature type="binding site" evidence="1">
    <location>
        <begin position="297"/>
        <end position="298"/>
    </location>
    <ligand>
        <name>FMN</name>
        <dbReference type="ChEBI" id="CHEBI:58210"/>
    </ligand>
</feature>
<sequence length="355" mass="38740">MNNNSIEYRKLEHLIVCDHCDVEYKKGTLLEDVELIHSGISNCDLDDIDTSIEIFGKKLNAPLIVAAITGGHPKAKEVNKNIAIAVEELNLGMGVGSQRAAISKSYLEDTYSVVRDHTSSLIIGNLGAVNFVEDSWDEEIISKSVEMIDADAMAIHFNPLQEAIQPEGDVNFKGLNILKEIISNYNKIHGKIPFIAKQVGEGFSKKDAIFLKEIGFDAIDVGGSGGTSWAAVELYRIKDEEQKNFSNQYFNWGIPTAASILEVNSAFSGPIIATGGIRTGIDIAKSISIGANCCGTALPILKAALKSSEAVTTVLERMIKELKTTMFLTGCNNINELKSARYILKGDLKNWKDQI</sequence>
<evidence type="ECO:0000255" key="1">
    <source>
        <dbReference type="HAMAP-Rule" id="MF_00354"/>
    </source>
</evidence>
<protein>
    <recommendedName>
        <fullName evidence="1">Isopentenyl-diphosphate delta-isomerase</fullName>
        <shortName evidence="1">IPP isomerase</shortName>
        <ecNumber evidence="1">5.3.3.2</ecNumber>
    </recommendedName>
    <alternativeName>
        <fullName evidence="1">Isopentenyl diphosphate:dimethylallyl diphosphate isomerase</fullName>
    </alternativeName>
    <alternativeName>
        <fullName evidence="1">Isopentenyl pyrophosphate isomerase</fullName>
    </alternativeName>
    <alternativeName>
        <fullName evidence="1">Type 2 isopentenyl diphosphate isomerase</fullName>
        <shortName evidence="1">IDI-2</shortName>
    </alternativeName>
</protein>
<organism>
    <name type="scientific">Methanococcus maripaludis (strain DSM 14266 / JCM 13030 / NBRC 101832 / S2 / LL)</name>
    <dbReference type="NCBI Taxonomy" id="267377"/>
    <lineage>
        <taxon>Archaea</taxon>
        <taxon>Methanobacteriati</taxon>
        <taxon>Methanobacteriota</taxon>
        <taxon>Methanomada group</taxon>
        <taxon>Methanococci</taxon>
        <taxon>Methanococcales</taxon>
        <taxon>Methanococcaceae</taxon>
        <taxon>Methanococcus</taxon>
    </lineage>
</organism>
<gene>
    <name evidence="1" type="primary">fni</name>
    <name type="ordered locus">MMP0043</name>
</gene>
<keyword id="KW-0963">Cytoplasm</keyword>
<keyword id="KW-0285">Flavoprotein</keyword>
<keyword id="KW-0288">FMN</keyword>
<keyword id="KW-0413">Isomerase</keyword>
<keyword id="KW-0414">Isoprene biosynthesis</keyword>
<keyword id="KW-0460">Magnesium</keyword>
<keyword id="KW-0479">Metal-binding</keyword>
<keyword id="KW-0521">NADP</keyword>
<keyword id="KW-1185">Reference proteome</keyword>
<accession>Q6M174</accession>
<proteinExistence type="inferred from homology"/>